<protein>
    <recommendedName>
        <fullName evidence="3">Inactive S-adenosylmethionine decarboxylase prozyme</fullName>
        <shortName evidence="5">AdoMetDC prozyme</shortName>
    </recommendedName>
</protein>
<comment type="function">
    <text evidence="1 2">Probably has no catalytic activity due to the loss of several residues required for processing and catalysis (PubMed:17485680). Forms a complex with S-adenosylmethionine decarboxylase AdoMetDC which is essential to activate AdoMetDC (PubMed:17485680, PubMed:18949025). Required for the biosynthesis of the polyamine spermidine (PubMed:18949025). Required for growth and survival during the bloodstream life cycle stage (PubMed:18949025).</text>
</comment>
<comment type="pathway">
    <text evidence="1 2">Amine and polyamine biosynthesis; S-adenosylmethioninamine biosynthesis; S-adenosylmethioninamine from S-adenosyl-L-methionine: step 1/1.</text>
</comment>
<comment type="subunit">
    <text evidence="1">Forms a heterodimer with S-adenosylmethionine decarboxylase AdoMetDC; heterodimerization is required to activate AdoMetDC.</text>
</comment>
<comment type="developmental stage">
    <text evidence="1">Expressed during both bloodstream (BF) and procyclic insect (PF) life cycle stages.</text>
</comment>
<comment type="disruption phenotype">
    <text evidence="2">RNAi-mediated knockdown at the bloodstream life cycle stage causes cell growth arrest followed by death. Putrescine levels are increased and the production of spermidine, glutathione, glutathionyl-spermidine and trypanothione is severely reduced. In addition, protein expression levels of ornithine carboxylase (ODC) are increased.</text>
</comment>
<comment type="similarity">
    <text evidence="4">Belongs to the eukaryotic AdoMetDC family.</text>
</comment>
<sequence>MSVTRINQQTECPSSVHDLVSCWGGCTQSKTSTDSGLEKRFELNFAQPVDIGTVTVKQLASVMERAGESLRQNSAELGIHTLKFDRSLLVFTAKQIVVRSSVSVMLHEAVHPMLELMRSHNIIVDWASFMRVNYGSPWDMTSETSDIMAHEYAELKSAFPTGHPYLAGPVDRDHCFYFVYDGIDRDPSSCRRENDVQINVYMYNVQADDEYDLDGNTKEQQLLVSHCAGEYETLRVSTYGSTHPFASFETNAVSAASDITKIVNGLLKKFYPERVLLVLLQDRDAQGTTACGVMDRLEGFTVVHRGANHFGGGYVFHQATYARSA</sequence>
<organism evidence="4">
    <name type="scientific">Trypanosoma brucei brucei</name>
    <dbReference type="NCBI Taxonomy" id="5702"/>
    <lineage>
        <taxon>Eukaryota</taxon>
        <taxon>Discoba</taxon>
        <taxon>Euglenozoa</taxon>
        <taxon>Kinetoplastea</taxon>
        <taxon>Metakinetoplastina</taxon>
        <taxon>Trypanosomatida</taxon>
        <taxon>Trypanosomatidae</taxon>
        <taxon>Trypanosoma</taxon>
    </lineage>
</organism>
<dbReference type="EMBL" id="EF545594">
    <property type="protein sequence ID" value="ABQ23689.1"/>
    <property type="molecule type" value="mRNA"/>
</dbReference>
<dbReference type="PDB" id="6BM7">
    <property type="method" value="X-ray"/>
    <property type="resolution" value="2.98 A"/>
    <property type="chains" value="E/F=1-325"/>
</dbReference>
<dbReference type="PDBsum" id="6BM7"/>
<dbReference type="SMR" id="A5HNV6"/>
<dbReference type="EnsemblProtists" id="AAZ12005">
    <property type="protein sequence ID" value="AAZ12005"/>
    <property type="gene ID" value="Tb927.6.4470"/>
</dbReference>
<dbReference type="HOGENOM" id="CLU_856601_0_0_1"/>
<dbReference type="OMA" id="FETNAKA"/>
<dbReference type="UniPathway" id="UPA00331">
    <property type="reaction ID" value="UER00451"/>
</dbReference>
<dbReference type="GO" id="GO:1902494">
    <property type="term" value="C:catalytic complex"/>
    <property type="evidence" value="ECO:0000314"/>
    <property type="project" value="UniProtKB"/>
</dbReference>
<dbReference type="GO" id="GO:0005829">
    <property type="term" value="C:cytosol"/>
    <property type="evidence" value="ECO:0007669"/>
    <property type="project" value="TreeGrafter"/>
</dbReference>
<dbReference type="GO" id="GO:0004014">
    <property type="term" value="F:adenosylmethionine decarboxylase activity"/>
    <property type="evidence" value="ECO:0007669"/>
    <property type="project" value="InterPro"/>
</dbReference>
<dbReference type="GO" id="GO:0008047">
    <property type="term" value="F:enzyme activator activity"/>
    <property type="evidence" value="ECO:0000314"/>
    <property type="project" value="UniProtKB"/>
</dbReference>
<dbReference type="GO" id="GO:0019899">
    <property type="term" value="F:enzyme binding"/>
    <property type="evidence" value="ECO:0000353"/>
    <property type="project" value="UniProtKB"/>
</dbReference>
<dbReference type="GO" id="GO:0046982">
    <property type="term" value="F:protein heterodimerization activity"/>
    <property type="evidence" value="ECO:0000353"/>
    <property type="project" value="UniProtKB"/>
</dbReference>
<dbReference type="GO" id="GO:0043085">
    <property type="term" value="P:positive regulation of catalytic activity"/>
    <property type="evidence" value="ECO:0000314"/>
    <property type="project" value="UniProtKB"/>
</dbReference>
<dbReference type="GO" id="GO:1901307">
    <property type="term" value="P:positive regulation of spermidine biosynthetic process"/>
    <property type="evidence" value="ECO:0000315"/>
    <property type="project" value="UniProtKB"/>
</dbReference>
<dbReference type="GO" id="GO:0046500">
    <property type="term" value="P:S-adenosylmethionine metabolic process"/>
    <property type="evidence" value="ECO:0000314"/>
    <property type="project" value="UniProtKB"/>
</dbReference>
<dbReference type="GO" id="GO:0008295">
    <property type="term" value="P:spermidine biosynthetic process"/>
    <property type="evidence" value="ECO:0007669"/>
    <property type="project" value="UniProtKB-KW"/>
</dbReference>
<dbReference type="GO" id="GO:0006597">
    <property type="term" value="P:spermine biosynthetic process"/>
    <property type="evidence" value="ECO:0007669"/>
    <property type="project" value="TreeGrafter"/>
</dbReference>
<dbReference type="GO" id="GO:0019342">
    <property type="term" value="P:trypanothione biosynthetic process"/>
    <property type="evidence" value="ECO:0000315"/>
    <property type="project" value="UniProtKB"/>
</dbReference>
<dbReference type="FunFam" id="3.60.90.10:FF:000024">
    <property type="entry name" value="Putative S-adenosylmethionine decarboxylase proenzyme-like"/>
    <property type="match status" value="1"/>
</dbReference>
<dbReference type="Gene3D" id="3.60.90.10">
    <property type="entry name" value="S-adenosylmethionine decarboxylase"/>
    <property type="match status" value="2"/>
</dbReference>
<dbReference type="InterPro" id="IPR048283">
    <property type="entry name" value="AdoMetDC-like"/>
</dbReference>
<dbReference type="InterPro" id="IPR016067">
    <property type="entry name" value="S-AdoMet_deCO2ase_core"/>
</dbReference>
<dbReference type="PANTHER" id="PTHR11570:SF2">
    <property type="entry name" value="DECARBOXYLASE PROENZYME-LIKE, PUTATIVE-RELATED"/>
    <property type="match status" value="1"/>
</dbReference>
<dbReference type="PANTHER" id="PTHR11570">
    <property type="entry name" value="S-ADENOSYLMETHIONINE DECARBOXYLASE"/>
    <property type="match status" value="1"/>
</dbReference>
<dbReference type="Pfam" id="PF01536">
    <property type="entry name" value="SAM_decarbox"/>
    <property type="match status" value="1"/>
</dbReference>
<dbReference type="SUPFAM" id="SSF56276">
    <property type="entry name" value="S-adenosylmethionine decarboxylase"/>
    <property type="match status" value="1"/>
</dbReference>
<reference evidence="6" key="1">
    <citation type="journal article" date="2007" name="Proc. Natl. Acad. Sci. U.S.A.">
        <title>Allosteric regulation of an essential trypanosome polyamine biosynthetic enzyme by a catalytically dead homolog.</title>
        <authorList>
            <person name="Willert E.K."/>
            <person name="Fitzpatrick R."/>
            <person name="Phillips M.A."/>
        </authorList>
    </citation>
    <scope>NUCLEOTIDE SEQUENCE [MRNA]</scope>
    <scope>FUNCTION</scope>
    <scope>PATHWAY</scope>
    <scope>INTERACTION WITH ADOMETDC</scope>
    <scope>DEVELOPMENTAL STAGE</scope>
    <source>
        <strain evidence="6">427</strain>
    </source>
</reference>
<reference evidence="4" key="2">
    <citation type="journal article" date="2008" name="PLoS Pathog.">
        <title>Regulated expression of an essential allosteric activator of polyamine biosynthesis in African trypanosomes.</title>
        <authorList>
            <person name="Willert E.K."/>
            <person name="Phillips M.A."/>
        </authorList>
    </citation>
    <scope>FUNCTION</scope>
    <scope>PATHWAY</scope>
    <scope>DISRUPTION PHENOTYPE</scope>
</reference>
<evidence type="ECO:0000269" key="1">
    <source>
    </source>
</evidence>
<evidence type="ECO:0000269" key="2">
    <source>
    </source>
</evidence>
<evidence type="ECO:0000303" key="3">
    <source>
    </source>
</evidence>
<evidence type="ECO:0000305" key="4"/>
<evidence type="ECO:0000305" key="5">
    <source>
    </source>
</evidence>
<evidence type="ECO:0000312" key="6">
    <source>
        <dbReference type="EMBL" id="ABQ23689.1"/>
    </source>
</evidence>
<evidence type="ECO:0007829" key="7">
    <source>
        <dbReference type="PDB" id="6BM7"/>
    </source>
</evidence>
<feature type="chain" id="PRO_0000438856" description="Inactive S-adenosylmethionine decarboxylase prozyme" evidence="4">
    <location>
        <begin position="1"/>
        <end position="325"/>
    </location>
</feature>
<feature type="strand" evidence="7">
    <location>
        <begin position="5"/>
        <end position="11"/>
    </location>
</feature>
<feature type="helix" evidence="7">
    <location>
        <begin position="16"/>
        <end position="22"/>
    </location>
</feature>
<feature type="strand" evidence="7">
    <location>
        <begin position="36"/>
        <end position="47"/>
    </location>
</feature>
<feature type="turn" evidence="7">
    <location>
        <begin position="51"/>
        <end position="53"/>
    </location>
</feature>
<feature type="helix" evidence="7">
    <location>
        <begin position="56"/>
        <end position="64"/>
    </location>
</feature>
<feature type="turn" evidence="7">
    <location>
        <begin position="65"/>
        <end position="67"/>
    </location>
</feature>
<feature type="strand" evidence="7">
    <location>
        <begin position="70"/>
        <end position="76"/>
    </location>
</feature>
<feature type="strand" evidence="7">
    <location>
        <begin position="79"/>
        <end position="91"/>
    </location>
</feature>
<feature type="strand" evidence="7">
    <location>
        <begin position="93"/>
        <end position="100"/>
    </location>
</feature>
<feature type="helix" evidence="7">
    <location>
        <begin position="107"/>
        <end position="119"/>
    </location>
</feature>
<feature type="strand" evidence="7">
    <location>
        <begin position="124"/>
        <end position="135"/>
    </location>
</feature>
<feature type="helix" evidence="7">
    <location>
        <begin position="144"/>
        <end position="158"/>
    </location>
</feature>
<feature type="strand" evidence="7">
    <location>
        <begin position="163"/>
        <end position="168"/>
    </location>
</feature>
<feature type="strand" evidence="7">
    <location>
        <begin position="172"/>
        <end position="181"/>
    </location>
</feature>
<feature type="strand" evidence="7">
    <location>
        <begin position="198"/>
        <end position="204"/>
    </location>
</feature>
<feature type="strand" evidence="7">
    <location>
        <begin position="220"/>
        <end position="224"/>
    </location>
</feature>
<feature type="strand" evidence="7">
    <location>
        <begin position="232"/>
        <end position="237"/>
    </location>
</feature>
<feature type="strand" evidence="7">
    <location>
        <begin position="245"/>
        <end position="250"/>
    </location>
</feature>
<feature type="helix" evidence="7">
    <location>
        <begin position="253"/>
        <end position="257"/>
    </location>
</feature>
<feature type="helix" evidence="7">
    <location>
        <begin position="259"/>
        <end position="270"/>
    </location>
</feature>
<feature type="strand" evidence="7">
    <location>
        <begin position="273"/>
        <end position="281"/>
    </location>
</feature>
<feature type="strand" evidence="7">
    <location>
        <begin position="300"/>
        <end position="310"/>
    </location>
</feature>
<feature type="strand" evidence="7">
    <location>
        <begin position="315"/>
        <end position="323"/>
    </location>
</feature>
<proteinExistence type="evidence at protein level"/>
<accession>A5HNV6</accession>
<name>DCAMP_TRYBB</name>
<keyword id="KW-0002">3D-structure</keyword>
<keyword id="KW-0620">Polyamine biosynthesis</keyword>
<keyword id="KW-0745">Spermidine biosynthesis</keyword>